<proteinExistence type="evidence at transcript level"/>
<feature type="chain" id="PRO_0000305249" description="Rho GTPase-activating protein 21">
    <location>
        <begin position="1"/>
        <end position="1935"/>
    </location>
</feature>
<feature type="domain" description="PDZ" evidence="2">
    <location>
        <begin position="78"/>
        <end position="163"/>
    </location>
</feature>
<feature type="domain" description="PH" evidence="3">
    <location>
        <begin position="920"/>
        <end position="1033"/>
    </location>
</feature>
<feature type="domain" description="Rho-GAP" evidence="4">
    <location>
        <begin position="1140"/>
        <end position="1332"/>
    </location>
</feature>
<feature type="region of interest" description="Disordered" evidence="5">
    <location>
        <begin position="1"/>
        <end position="46"/>
    </location>
</feature>
<feature type="region of interest" description="Disordered" evidence="5">
    <location>
        <begin position="212"/>
        <end position="237"/>
    </location>
</feature>
<feature type="region of interest" description="Disordered" evidence="5">
    <location>
        <begin position="339"/>
        <end position="373"/>
    </location>
</feature>
<feature type="region of interest" description="Disordered" evidence="5">
    <location>
        <begin position="413"/>
        <end position="456"/>
    </location>
</feature>
<feature type="region of interest" description="Disordered" evidence="5">
    <location>
        <begin position="673"/>
        <end position="718"/>
    </location>
</feature>
<feature type="region of interest" description="Disordered" evidence="5">
    <location>
        <begin position="862"/>
        <end position="919"/>
    </location>
</feature>
<feature type="region of interest" description="Disordered" evidence="5">
    <location>
        <begin position="1056"/>
        <end position="1126"/>
    </location>
</feature>
<feature type="region of interest" description="Disordered" evidence="5">
    <location>
        <begin position="1341"/>
        <end position="1393"/>
    </location>
</feature>
<feature type="region of interest" description="Disordered" evidence="5">
    <location>
        <begin position="1411"/>
        <end position="1431"/>
    </location>
</feature>
<feature type="region of interest" description="Disordered" evidence="5">
    <location>
        <begin position="1488"/>
        <end position="1510"/>
    </location>
</feature>
<feature type="region of interest" description="Disordered" evidence="5">
    <location>
        <begin position="1525"/>
        <end position="1548"/>
    </location>
</feature>
<feature type="region of interest" description="Disordered" evidence="5">
    <location>
        <begin position="1637"/>
        <end position="1665"/>
    </location>
</feature>
<feature type="region of interest" description="Disordered" evidence="5">
    <location>
        <begin position="1688"/>
        <end position="1733"/>
    </location>
</feature>
<feature type="region of interest" description="Disordered" evidence="5">
    <location>
        <begin position="1838"/>
        <end position="1925"/>
    </location>
</feature>
<feature type="compositionally biased region" description="Polar residues" evidence="5">
    <location>
        <begin position="217"/>
        <end position="237"/>
    </location>
</feature>
<feature type="compositionally biased region" description="Polar residues" evidence="5">
    <location>
        <begin position="348"/>
        <end position="373"/>
    </location>
</feature>
<feature type="compositionally biased region" description="Polar residues" evidence="5">
    <location>
        <begin position="413"/>
        <end position="429"/>
    </location>
</feature>
<feature type="compositionally biased region" description="Low complexity" evidence="5">
    <location>
        <begin position="441"/>
        <end position="451"/>
    </location>
</feature>
<feature type="compositionally biased region" description="Low complexity" evidence="5">
    <location>
        <begin position="673"/>
        <end position="685"/>
    </location>
</feature>
<feature type="compositionally biased region" description="Polar residues" evidence="5">
    <location>
        <begin position="708"/>
        <end position="718"/>
    </location>
</feature>
<feature type="compositionally biased region" description="Basic and acidic residues" evidence="5">
    <location>
        <begin position="863"/>
        <end position="884"/>
    </location>
</feature>
<feature type="compositionally biased region" description="Low complexity" evidence="5">
    <location>
        <begin position="1059"/>
        <end position="1072"/>
    </location>
</feature>
<feature type="compositionally biased region" description="Basic and acidic residues" evidence="5">
    <location>
        <begin position="1097"/>
        <end position="1119"/>
    </location>
</feature>
<feature type="compositionally biased region" description="Polar residues" evidence="5">
    <location>
        <begin position="1345"/>
        <end position="1355"/>
    </location>
</feature>
<feature type="compositionally biased region" description="Low complexity" evidence="5">
    <location>
        <begin position="1376"/>
        <end position="1393"/>
    </location>
</feature>
<feature type="compositionally biased region" description="Polar residues" evidence="5">
    <location>
        <begin position="1525"/>
        <end position="1543"/>
    </location>
</feature>
<feature type="compositionally biased region" description="Polar residues" evidence="5">
    <location>
        <begin position="1646"/>
        <end position="1662"/>
    </location>
</feature>
<feature type="compositionally biased region" description="Basic and acidic residues" evidence="5">
    <location>
        <begin position="1691"/>
        <end position="1705"/>
    </location>
</feature>
<feature type="compositionally biased region" description="Polar residues" evidence="5">
    <location>
        <begin position="1872"/>
        <end position="1889"/>
    </location>
</feature>
<feature type="compositionally biased region" description="Polar residues" evidence="5">
    <location>
        <begin position="1898"/>
        <end position="1911"/>
    </location>
</feature>
<feature type="site" description="Arginine finger; crucial for GTP hydrolysis by stabilizing the transition state" evidence="4">
    <location>
        <position position="1177"/>
    </location>
</feature>
<accession>A2RUV4</accession>
<organism>
    <name type="scientific">Xenopus tropicalis</name>
    <name type="common">Western clawed frog</name>
    <name type="synonym">Silurana tropicalis</name>
    <dbReference type="NCBI Taxonomy" id="8364"/>
    <lineage>
        <taxon>Eukaryota</taxon>
        <taxon>Metazoa</taxon>
        <taxon>Chordata</taxon>
        <taxon>Craniata</taxon>
        <taxon>Vertebrata</taxon>
        <taxon>Euteleostomi</taxon>
        <taxon>Amphibia</taxon>
        <taxon>Batrachia</taxon>
        <taxon>Anura</taxon>
        <taxon>Pipoidea</taxon>
        <taxon>Pipidae</taxon>
        <taxon>Xenopodinae</taxon>
        <taxon>Xenopus</taxon>
        <taxon>Silurana</taxon>
    </lineage>
</organism>
<evidence type="ECO:0000250" key="1"/>
<evidence type="ECO:0000255" key="2">
    <source>
        <dbReference type="PROSITE-ProRule" id="PRU00143"/>
    </source>
</evidence>
<evidence type="ECO:0000255" key="3">
    <source>
        <dbReference type="PROSITE-ProRule" id="PRU00145"/>
    </source>
</evidence>
<evidence type="ECO:0000255" key="4">
    <source>
        <dbReference type="PROSITE-ProRule" id="PRU00172"/>
    </source>
</evidence>
<evidence type="ECO:0000256" key="5">
    <source>
        <dbReference type="SAM" id="MobiDB-lite"/>
    </source>
</evidence>
<keyword id="KW-0965">Cell junction</keyword>
<keyword id="KW-0963">Cytoplasm</keyword>
<keyword id="KW-0968">Cytoplasmic vesicle</keyword>
<keyword id="KW-0206">Cytoskeleton</keyword>
<keyword id="KW-0333">Golgi apparatus</keyword>
<keyword id="KW-0343">GTPase activation</keyword>
<keyword id="KW-0472">Membrane</keyword>
<keyword id="KW-1185">Reference proteome</keyword>
<gene>
    <name type="primary">arhgap21</name>
</gene>
<comment type="function">
    <text evidence="1">GTPase-activating protein (GAP) for rhoa and cdc42.</text>
</comment>
<comment type="subcellular location">
    <subcellularLocation>
        <location evidence="1">Golgi apparatus membrane</location>
        <topology evidence="1">Peripheral membrane protein</topology>
    </subcellularLocation>
    <subcellularLocation>
        <location evidence="1">Cell junction</location>
    </subcellularLocation>
    <subcellularLocation>
        <location evidence="1">Cytoplasmic vesicle membrane</location>
        <topology evidence="1">Peripheral membrane protein</topology>
    </subcellularLocation>
    <subcellularLocation>
        <location evidence="1">Cytoplasm</location>
        <location evidence="1">Cytoskeleton</location>
    </subcellularLocation>
</comment>
<reference key="1">
    <citation type="submission" date="2007-02" db="EMBL/GenBank/DDBJ databases">
        <authorList>
            <consortium name="NIH - Xenopus Gene Collection (XGC) project"/>
        </authorList>
    </citation>
    <scope>NUCLEOTIDE SEQUENCE [LARGE SCALE MRNA]</scope>
    <source>
        <tissue>Testis</tissue>
    </source>
</reference>
<sequence length="1935" mass="215607">MATRRATVPEQQQQQPSSPGSEISKNKDGQEQSEMVSPTEEEGFCWPGPKSVALRRASEGFGFTLRHFIVYPPESAVHTTVKDEENGNRGVNAGRPRNRLEPMDTIFVKQVKEGGPAHEAGLCTGDRIIKVNGESVIGKTYSQVIALIQNSDSTLELSVMPKDEDILQLAYSQDAYLKGNDSYSGNAQNIPEPPPICYPRTKPAASVMAQPVEVPPSGTSLTKQQSSRPVRTATTQPDRSYRVEIQVPPSPTDIVKSNTAVCVCNEAVRTVILPSEKVVDLSSNRTNRAGPLHRTEEVRYGLADPSMLKRTTSPPSSTPSVPMVPASRQFDNAGVIGKPPSYGGHSESMFSTRPSQAEESPSPTNHYASPGSHQQIDWRNYKTYKEYIDNRRMQMYGCRTIQERLDSLRAASQNTTDYDQMLPNRSSGQVRRRSTSHDRVPQSVQMRQRSVSQERLEDPVLMKEWPRSASQDTLTSLTVAPRNHRSESWDYLTRKEDFDQFIVDTQSNGEQKHNYKWTGFTEQDDQRGIYEIPRQHSFHMSLRSPNYTMAPLPYPSDSRRAGTRVLAPARPLQKVHPDLKTIQPTRNFQNSYRSPHPRPAVSERLVFPISKSNSVKIPATYASKPYSPSVGSEDGIVKDQKAVNYIHVSGPQNFQRKPQTESALGFQLDSLKTSTSASSSSPAHTKPAKQAKHSTATSQNVDGKKTQSPEANAGDSNSVLTSIDQVVLREKPSPGQQTSQPIRQPSYIFAVSDVEGASDTTCWLPNDARREVHIKRIEQKKASGSDSPGDSLASIPFIDEPTSPSIDHEIANIPASAVISISVQPLPTITTVPPSPTSPVPLIRRHFSHDHDSIRPSILEVNSKTERSKSCDEGLDDYKDEGKLSLKQGSSLKGIKARENVPSSEDSESRKDSSSDVFSDSNKEGFLYFRQLTTEKGKRVSGSMRPWKQMYVVLRGSALYLQKDKKEQSGHSSAQSDEEQLIGINGCLIDISYSETKRKNVFRLTTSDREFLFQAEDRDDMLAWIKAIQENGNLNDEQTDQASRVLISKRIKEYNTMMSSSSNKSEQSPKPSRQTLSIRQPFRATKPEGKLQSPHSPKQESERRLFSKDDISPPKDKGSWRRIMKKPFEKKPTTGGTFGVRLDDCPPAHNNKYVPLIVDVCCKLVEDRGLETTGIYRVPGNNAAISSMQEELNKGSTDIDIQDDKWRDLNVISSLLKSFFRKLPDPLFTNEKYNDFIEANRTEDPVERLKTLKRLILDLPDHHYETLKYLSAHLKAVAENSEKNKMEPRNLAIVFGPTLVRTSEDNMTHMVTHMPDQYKIVETLIQQHDWFFSEESADEPITAVQEESTVESQPVPNIDHLLPNIGRTGLSPGDVSDSASDSAKSKGSWGSGKDQYSRELLVSSLFAAASRKRKKQRDKPQPSSSEDELDNVFYQKELLQVEFQRPDKQNVDKDVDLKANALSLKDADNIKGTNIIKEDKLEKDIMHSEATSPCPPKLSEPPIVNHRLPPDDKNIPQISFQMEESMSDSGTMLSTSSQASAQRSKPKVVSPELKGSDFLTADVSSITSDYSTTSSTIYIVGLDQNLISPEVQSVAESKGEEADDERSELISEGRPMETDSENDFPIFASSIAFDRQHRSKVEEPTRNVQVNSEGSPSCTEGSITPRMDRRRFSSHKLIECDTLSRKKSIRQKTDSECSAESKNEETLSDAQEAVKKGRSLSIGDTTTNNEPEEPAWRIKITERLKLRLKASADDMFGIGSQKAQAAETRKKKNIRRRHTLGGQRDFAEISVLNAWKINEPSSKEAELSAVDRLKPKCPSQDLSISDWLARERLRTSTSELSMVEPEEKRISDATSQKEPASPSPPPASSPSQVSTAIVTAGSESPSQGTAPPPDDQMNGDSFQSKNKNNFSPAVDAHPHKLSGTQVVRSRFYQYL</sequence>
<protein>
    <recommendedName>
        <fullName>Rho GTPase-activating protein 21</fullName>
    </recommendedName>
    <alternativeName>
        <fullName>Rho-type GTPase-activating protein 21</fullName>
    </alternativeName>
</protein>
<name>RHG21_XENTR</name>
<dbReference type="EMBL" id="BC133058">
    <property type="protein sequence ID" value="AAI33059.1"/>
    <property type="molecule type" value="mRNA"/>
</dbReference>
<dbReference type="RefSeq" id="NP_001090761.1">
    <property type="nucleotide sequence ID" value="NM_001097292.1"/>
</dbReference>
<dbReference type="SMR" id="A2RUV4"/>
<dbReference type="FunCoup" id="A2RUV4">
    <property type="interactions" value="1368"/>
</dbReference>
<dbReference type="STRING" id="8364.ENSXETP00000049725"/>
<dbReference type="PaxDb" id="8364-ENSXETP00000032292"/>
<dbReference type="DNASU" id="100037846"/>
<dbReference type="GeneID" id="100037846"/>
<dbReference type="KEGG" id="xtr:100037846"/>
<dbReference type="AGR" id="Xenbase:XB-GENE-1011028"/>
<dbReference type="CTD" id="57584"/>
<dbReference type="Xenbase" id="XB-GENE-1011028">
    <property type="gene designation" value="arhgap21"/>
</dbReference>
<dbReference type="eggNOG" id="KOG4407">
    <property type="taxonomic scope" value="Eukaryota"/>
</dbReference>
<dbReference type="InParanoid" id="A2RUV4"/>
<dbReference type="OrthoDB" id="6281275at2759"/>
<dbReference type="Reactome" id="R-XTR-8980692">
    <property type="pathway name" value="RHOA GTPase cycle"/>
</dbReference>
<dbReference type="Reactome" id="R-XTR-9013026">
    <property type="pathway name" value="RHOB GTPase cycle"/>
</dbReference>
<dbReference type="Reactome" id="R-XTR-9013148">
    <property type="pathway name" value="CDC42 GTPase cycle"/>
</dbReference>
<dbReference type="Reactome" id="R-XTR-9013149">
    <property type="pathway name" value="RAC1 GTPase cycle"/>
</dbReference>
<dbReference type="Reactome" id="R-XTR-9013404">
    <property type="pathway name" value="RAC2 GTPase cycle"/>
</dbReference>
<dbReference type="Reactome" id="R-XTR-9013405">
    <property type="pathway name" value="RHOD GTPase cycle"/>
</dbReference>
<dbReference type="Reactome" id="R-XTR-9013406">
    <property type="pathway name" value="RHOQ GTPase cycle"/>
</dbReference>
<dbReference type="Reactome" id="R-XTR-9013408">
    <property type="pathway name" value="RHOG GTPase cycle"/>
</dbReference>
<dbReference type="Reactome" id="R-XTR-9013409">
    <property type="pathway name" value="RHOJ GTPase cycle"/>
</dbReference>
<dbReference type="Reactome" id="R-XTR-9013423">
    <property type="pathway name" value="RAC3 GTPase cycle"/>
</dbReference>
<dbReference type="Reactome" id="R-XTR-9035034">
    <property type="pathway name" value="RHOF GTPase cycle"/>
</dbReference>
<dbReference type="Reactome" id="R-XTR-9696264">
    <property type="pathway name" value="RND3 GTPase cycle"/>
</dbReference>
<dbReference type="Proteomes" id="UP000008143">
    <property type="component" value="Chromosome 6"/>
</dbReference>
<dbReference type="GO" id="GO:0070161">
    <property type="term" value="C:anchoring junction"/>
    <property type="evidence" value="ECO:0007669"/>
    <property type="project" value="UniProtKB-SubCell"/>
</dbReference>
<dbReference type="GO" id="GO:0030659">
    <property type="term" value="C:cytoplasmic vesicle membrane"/>
    <property type="evidence" value="ECO:0007669"/>
    <property type="project" value="UniProtKB-SubCell"/>
</dbReference>
<dbReference type="GO" id="GO:0005856">
    <property type="term" value="C:cytoskeleton"/>
    <property type="evidence" value="ECO:0007669"/>
    <property type="project" value="UniProtKB-SubCell"/>
</dbReference>
<dbReference type="GO" id="GO:0000139">
    <property type="term" value="C:Golgi membrane"/>
    <property type="evidence" value="ECO:0007669"/>
    <property type="project" value="UniProtKB-SubCell"/>
</dbReference>
<dbReference type="GO" id="GO:0005096">
    <property type="term" value="F:GTPase activator activity"/>
    <property type="evidence" value="ECO:0007669"/>
    <property type="project" value="UniProtKB-KW"/>
</dbReference>
<dbReference type="GO" id="GO:0007165">
    <property type="term" value="P:signal transduction"/>
    <property type="evidence" value="ECO:0007669"/>
    <property type="project" value="InterPro"/>
</dbReference>
<dbReference type="CDD" id="cd06756">
    <property type="entry name" value="PDZ_ARHGAP21_23-like"/>
    <property type="match status" value="1"/>
</dbReference>
<dbReference type="CDD" id="cd01253">
    <property type="entry name" value="PH_ARHGAP21-like"/>
    <property type="match status" value="1"/>
</dbReference>
<dbReference type="CDD" id="cd04395">
    <property type="entry name" value="RhoGAP_ARHGAP21"/>
    <property type="match status" value="1"/>
</dbReference>
<dbReference type="FunFam" id="1.10.555.10:FF:000014">
    <property type="entry name" value="Rho GTPase activating protein 21"/>
    <property type="match status" value="1"/>
</dbReference>
<dbReference type="FunFam" id="2.30.42.10:FF:000066">
    <property type="entry name" value="Rho GTPase activating protein 21"/>
    <property type="match status" value="1"/>
</dbReference>
<dbReference type="Gene3D" id="1.20.5.220">
    <property type="match status" value="1"/>
</dbReference>
<dbReference type="Gene3D" id="2.30.42.10">
    <property type="match status" value="1"/>
</dbReference>
<dbReference type="Gene3D" id="2.30.29.30">
    <property type="entry name" value="Pleckstrin-homology domain (PH domain)/Phosphotyrosine-binding domain (PTB)"/>
    <property type="match status" value="1"/>
</dbReference>
<dbReference type="Gene3D" id="1.10.555.10">
    <property type="entry name" value="Rho GTPase activation protein"/>
    <property type="match status" value="1"/>
</dbReference>
<dbReference type="InterPro" id="IPR001478">
    <property type="entry name" value="PDZ"/>
</dbReference>
<dbReference type="InterPro" id="IPR041489">
    <property type="entry name" value="PDZ_6"/>
</dbReference>
<dbReference type="InterPro" id="IPR036034">
    <property type="entry name" value="PDZ_sf"/>
</dbReference>
<dbReference type="InterPro" id="IPR011993">
    <property type="entry name" value="PH-like_dom_sf"/>
</dbReference>
<dbReference type="InterPro" id="IPR001849">
    <property type="entry name" value="PH_domain"/>
</dbReference>
<dbReference type="InterPro" id="IPR008936">
    <property type="entry name" value="Rho_GTPase_activation_prot"/>
</dbReference>
<dbReference type="InterPro" id="IPR000198">
    <property type="entry name" value="RhoGAP_dom"/>
</dbReference>
<dbReference type="PANTHER" id="PTHR23175">
    <property type="entry name" value="PDZ DOMAIN-CONTAINING PROTEIN"/>
    <property type="match status" value="1"/>
</dbReference>
<dbReference type="PANTHER" id="PTHR23175:SF16">
    <property type="entry name" value="RHO GTPASE-ACTIVATING PROTEIN 21"/>
    <property type="match status" value="1"/>
</dbReference>
<dbReference type="Pfam" id="PF17820">
    <property type="entry name" value="PDZ_6"/>
    <property type="match status" value="1"/>
</dbReference>
<dbReference type="Pfam" id="PF00169">
    <property type="entry name" value="PH"/>
    <property type="match status" value="1"/>
</dbReference>
<dbReference type="Pfam" id="PF00620">
    <property type="entry name" value="RhoGAP"/>
    <property type="match status" value="1"/>
</dbReference>
<dbReference type="SMART" id="SM00228">
    <property type="entry name" value="PDZ"/>
    <property type="match status" value="1"/>
</dbReference>
<dbReference type="SMART" id="SM00233">
    <property type="entry name" value="PH"/>
    <property type="match status" value="1"/>
</dbReference>
<dbReference type="SMART" id="SM00324">
    <property type="entry name" value="RhoGAP"/>
    <property type="match status" value="1"/>
</dbReference>
<dbReference type="SUPFAM" id="SSF48350">
    <property type="entry name" value="GTPase activation domain, GAP"/>
    <property type="match status" value="1"/>
</dbReference>
<dbReference type="SUPFAM" id="SSF50156">
    <property type="entry name" value="PDZ domain-like"/>
    <property type="match status" value="1"/>
</dbReference>
<dbReference type="SUPFAM" id="SSF50729">
    <property type="entry name" value="PH domain-like"/>
    <property type="match status" value="1"/>
</dbReference>
<dbReference type="PROSITE" id="PS50106">
    <property type="entry name" value="PDZ"/>
    <property type="match status" value="1"/>
</dbReference>
<dbReference type="PROSITE" id="PS50003">
    <property type="entry name" value="PH_DOMAIN"/>
    <property type="match status" value="1"/>
</dbReference>
<dbReference type="PROSITE" id="PS50238">
    <property type="entry name" value="RHOGAP"/>
    <property type="match status" value="1"/>
</dbReference>